<protein>
    <recommendedName>
        <fullName evidence="1">Probable dual-specificity RNA methyltransferase RlmN</fullName>
        <ecNumber evidence="1">2.1.1.192</ecNumber>
    </recommendedName>
    <alternativeName>
        <fullName evidence="1">23S rRNA (adenine(2503)-C(2))-methyltransferase</fullName>
    </alternativeName>
    <alternativeName>
        <fullName evidence="1">23S rRNA m2A2503 methyltransferase</fullName>
    </alternativeName>
    <alternativeName>
        <fullName evidence="1">Ribosomal RNA large subunit methyltransferase N</fullName>
    </alternativeName>
    <alternativeName>
        <fullName evidence="1">tRNA (adenine(37)-C(2))-methyltransferase</fullName>
    </alternativeName>
    <alternativeName>
        <fullName evidence="1">tRNA m2A37 methyltransferase</fullName>
    </alternativeName>
</protein>
<comment type="function">
    <text evidence="1">Specifically methylates position 2 of adenine 2503 in 23S rRNA and position 2 of adenine 37 in tRNAs.</text>
</comment>
<comment type="catalytic activity">
    <reaction evidence="1">
        <text>adenosine(2503) in 23S rRNA + 2 reduced [2Fe-2S]-[ferredoxin] + 2 S-adenosyl-L-methionine = 2-methyladenosine(2503) in 23S rRNA + 5'-deoxyadenosine + L-methionine + 2 oxidized [2Fe-2S]-[ferredoxin] + S-adenosyl-L-homocysteine</text>
        <dbReference type="Rhea" id="RHEA:42916"/>
        <dbReference type="Rhea" id="RHEA-COMP:10000"/>
        <dbReference type="Rhea" id="RHEA-COMP:10001"/>
        <dbReference type="Rhea" id="RHEA-COMP:10152"/>
        <dbReference type="Rhea" id="RHEA-COMP:10282"/>
        <dbReference type="ChEBI" id="CHEBI:17319"/>
        <dbReference type="ChEBI" id="CHEBI:33737"/>
        <dbReference type="ChEBI" id="CHEBI:33738"/>
        <dbReference type="ChEBI" id="CHEBI:57844"/>
        <dbReference type="ChEBI" id="CHEBI:57856"/>
        <dbReference type="ChEBI" id="CHEBI:59789"/>
        <dbReference type="ChEBI" id="CHEBI:74411"/>
        <dbReference type="ChEBI" id="CHEBI:74497"/>
        <dbReference type="EC" id="2.1.1.192"/>
    </reaction>
</comment>
<comment type="catalytic activity">
    <reaction evidence="1">
        <text>adenosine(37) in tRNA + 2 reduced [2Fe-2S]-[ferredoxin] + 2 S-adenosyl-L-methionine = 2-methyladenosine(37) in tRNA + 5'-deoxyadenosine + L-methionine + 2 oxidized [2Fe-2S]-[ferredoxin] + S-adenosyl-L-homocysteine</text>
        <dbReference type="Rhea" id="RHEA:43332"/>
        <dbReference type="Rhea" id="RHEA-COMP:10000"/>
        <dbReference type="Rhea" id="RHEA-COMP:10001"/>
        <dbReference type="Rhea" id="RHEA-COMP:10162"/>
        <dbReference type="Rhea" id="RHEA-COMP:10485"/>
        <dbReference type="ChEBI" id="CHEBI:17319"/>
        <dbReference type="ChEBI" id="CHEBI:33737"/>
        <dbReference type="ChEBI" id="CHEBI:33738"/>
        <dbReference type="ChEBI" id="CHEBI:57844"/>
        <dbReference type="ChEBI" id="CHEBI:57856"/>
        <dbReference type="ChEBI" id="CHEBI:59789"/>
        <dbReference type="ChEBI" id="CHEBI:74411"/>
        <dbReference type="ChEBI" id="CHEBI:74497"/>
        <dbReference type="EC" id="2.1.1.192"/>
    </reaction>
</comment>
<comment type="cofactor">
    <cofactor evidence="1">
        <name>[4Fe-4S] cluster</name>
        <dbReference type="ChEBI" id="CHEBI:49883"/>
    </cofactor>
    <text evidence="1">Binds 1 [4Fe-4S] cluster. The cluster is coordinated with 3 cysteines and an exchangeable S-adenosyl-L-methionine.</text>
</comment>
<comment type="subcellular location">
    <subcellularLocation>
        <location evidence="1">Cytoplasm</location>
    </subcellularLocation>
</comment>
<comment type="miscellaneous">
    <text evidence="1">Reaction proceeds by a ping-pong mechanism involving intermediate methylation of a conserved cysteine residue.</text>
</comment>
<comment type="similarity">
    <text evidence="1">Belongs to the radical SAM superfamily. RlmN family.</text>
</comment>
<dbReference type="EC" id="2.1.1.192" evidence="1"/>
<dbReference type="EMBL" id="Y13937">
    <property type="protein sequence ID" value="CAA74265.1"/>
    <property type="molecule type" value="Genomic_DNA"/>
</dbReference>
<dbReference type="EMBL" id="AL009126">
    <property type="protein sequence ID" value="CAB13448.1"/>
    <property type="molecule type" value="Genomic_DNA"/>
</dbReference>
<dbReference type="PIR" id="F69878">
    <property type="entry name" value="F69878"/>
</dbReference>
<dbReference type="RefSeq" id="NP_389457.1">
    <property type="nucleotide sequence ID" value="NC_000964.3"/>
</dbReference>
<dbReference type="RefSeq" id="WP_003232066.1">
    <property type="nucleotide sequence ID" value="NZ_OZ025638.1"/>
</dbReference>
<dbReference type="SMR" id="O34617"/>
<dbReference type="FunCoup" id="O34617">
    <property type="interactions" value="563"/>
</dbReference>
<dbReference type="STRING" id="224308.BSU15750"/>
<dbReference type="PaxDb" id="224308-BSU15750"/>
<dbReference type="EnsemblBacteria" id="CAB13448">
    <property type="protein sequence ID" value="CAB13448"/>
    <property type="gene ID" value="BSU_15750"/>
</dbReference>
<dbReference type="GeneID" id="936310"/>
<dbReference type="KEGG" id="bsu:BSU15750"/>
<dbReference type="PATRIC" id="fig|224308.179.peg.1715"/>
<dbReference type="eggNOG" id="COG0820">
    <property type="taxonomic scope" value="Bacteria"/>
</dbReference>
<dbReference type="InParanoid" id="O34617"/>
<dbReference type="OrthoDB" id="9793973at2"/>
<dbReference type="PhylomeDB" id="O34617"/>
<dbReference type="BioCyc" id="BSUB:BSU15750-MONOMER"/>
<dbReference type="BRENDA" id="2.1.1.192">
    <property type="organism ID" value="658"/>
</dbReference>
<dbReference type="Proteomes" id="UP000001570">
    <property type="component" value="Chromosome"/>
</dbReference>
<dbReference type="GO" id="GO:0005737">
    <property type="term" value="C:cytoplasm"/>
    <property type="evidence" value="ECO:0007669"/>
    <property type="project" value="UniProtKB-SubCell"/>
</dbReference>
<dbReference type="GO" id="GO:0051539">
    <property type="term" value="F:4 iron, 4 sulfur cluster binding"/>
    <property type="evidence" value="ECO:0007669"/>
    <property type="project" value="UniProtKB-UniRule"/>
</dbReference>
<dbReference type="GO" id="GO:0046872">
    <property type="term" value="F:metal ion binding"/>
    <property type="evidence" value="ECO:0007669"/>
    <property type="project" value="UniProtKB-KW"/>
</dbReference>
<dbReference type="GO" id="GO:0070040">
    <property type="term" value="F:rRNA (adenine(2503)-C2-)-methyltransferase activity"/>
    <property type="evidence" value="ECO:0007669"/>
    <property type="project" value="UniProtKB-UniRule"/>
</dbReference>
<dbReference type="GO" id="GO:0019843">
    <property type="term" value="F:rRNA binding"/>
    <property type="evidence" value="ECO:0007669"/>
    <property type="project" value="UniProtKB-UniRule"/>
</dbReference>
<dbReference type="GO" id="GO:0002935">
    <property type="term" value="F:tRNA (adenine(37)-C2)-methyltransferase activity"/>
    <property type="evidence" value="ECO:0007669"/>
    <property type="project" value="UniProtKB-UniRule"/>
</dbReference>
<dbReference type="GO" id="GO:0000049">
    <property type="term" value="F:tRNA binding"/>
    <property type="evidence" value="ECO:0007669"/>
    <property type="project" value="UniProtKB-UniRule"/>
</dbReference>
<dbReference type="GO" id="GO:0070475">
    <property type="term" value="P:rRNA base methylation"/>
    <property type="evidence" value="ECO:0000318"/>
    <property type="project" value="GO_Central"/>
</dbReference>
<dbReference type="GO" id="GO:0030488">
    <property type="term" value="P:tRNA methylation"/>
    <property type="evidence" value="ECO:0000318"/>
    <property type="project" value="GO_Central"/>
</dbReference>
<dbReference type="CDD" id="cd01335">
    <property type="entry name" value="Radical_SAM"/>
    <property type="match status" value="1"/>
</dbReference>
<dbReference type="FunFam" id="1.10.150.530:FF:000002">
    <property type="entry name" value="Probable dual-specificity RNA methyltransferase RlmN"/>
    <property type="match status" value="1"/>
</dbReference>
<dbReference type="FunFam" id="3.20.20.70:FF:000014">
    <property type="entry name" value="Probable dual-specificity RNA methyltransferase RlmN"/>
    <property type="match status" value="1"/>
</dbReference>
<dbReference type="Gene3D" id="1.10.150.530">
    <property type="match status" value="1"/>
</dbReference>
<dbReference type="Gene3D" id="3.20.20.70">
    <property type="entry name" value="Aldolase class I"/>
    <property type="match status" value="1"/>
</dbReference>
<dbReference type="HAMAP" id="MF_01849">
    <property type="entry name" value="RNA_methyltr_RlmN"/>
    <property type="match status" value="1"/>
</dbReference>
<dbReference type="InterPro" id="IPR013785">
    <property type="entry name" value="Aldolase_TIM"/>
</dbReference>
<dbReference type="InterPro" id="IPR040072">
    <property type="entry name" value="Methyltransferase_A"/>
</dbReference>
<dbReference type="InterPro" id="IPR048641">
    <property type="entry name" value="RlmN_N"/>
</dbReference>
<dbReference type="InterPro" id="IPR027492">
    <property type="entry name" value="RNA_MTrfase_RlmN"/>
</dbReference>
<dbReference type="InterPro" id="IPR004383">
    <property type="entry name" value="rRNA_lsu_MTrfase_RlmN/Cfr"/>
</dbReference>
<dbReference type="InterPro" id="IPR007197">
    <property type="entry name" value="rSAM"/>
</dbReference>
<dbReference type="NCBIfam" id="TIGR00048">
    <property type="entry name" value="rRNA_mod_RlmN"/>
    <property type="match status" value="1"/>
</dbReference>
<dbReference type="PANTHER" id="PTHR30544">
    <property type="entry name" value="23S RRNA METHYLTRANSFERASE"/>
    <property type="match status" value="1"/>
</dbReference>
<dbReference type="PANTHER" id="PTHR30544:SF5">
    <property type="entry name" value="RADICAL SAM CORE DOMAIN-CONTAINING PROTEIN"/>
    <property type="match status" value="1"/>
</dbReference>
<dbReference type="Pfam" id="PF04055">
    <property type="entry name" value="Radical_SAM"/>
    <property type="match status" value="1"/>
</dbReference>
<dbReference type="Pfam" id="PF21016">
    <property type="entry name" value="RlmN_N"/>
    <property type="match status" value="1"/>
</dbReference>
<dbReference type="PIRSF" id="PIRSF006004">
    <property type="entry name" value="CHP00048"/>
    <property type="match status" value="1"/>
</dbReference>
<dbReference type="SFLD" id="SFLDF00275">
    <property type="entry name" value="adenosine_C2_methyltransferase"/>
    <property type="match status" value="1"/>
</dbReference>
<dbReference type="SFLD" id="SFLDG01062">
    <property type="entry name" value="methyltransferase_(Class_A)"/>
    <property type="match status" value="1"/>
</dbReference>
<dbReference type="SUPFAM" id="SSF102114">
    <property type="entry name" value="Radical SAM enzymes"/>
    <property type="match status" value="1"/>
</dbReference>
<dbReference type="PROSITE" id="PS51918">
    <property type="entry name" value="RADICAL_SAM"/>
    <property type="match status" value="1"/>
</dbReference>
<name>RLMN_BACSU</name>
<keyword id="KW-0004">4Fe-4S</keyword>
<keyword id="KW-0963">Cytoplasm</keyword>
<keyword id="KW-1015">Disulfide bond</keyword>
<keyword id="KW-0408">Iron</keyword>
<keyword id="KW-0411">Iron-sulfur</keyword>
<keyword id="KW-0479">Metal-binding</keyword>
<keyword id="KW-0489">Methyltransferase</keyword>
<keyword id="KW-1185">Reference proteome</keyword>
<keyword id="KW-0698">rRNA processing</keyword>
<keyword id="KW-0949">S-adenosyl-L-methionine</keyword>
<keyword id="KW-0808">Transferase</keyword>
<keyword id="KW-0819">tRNA processing</keyword>
<proteinExistence type="inferred from homology"/>
<reference key="1">
    <citation type="journal article" date="1998" name="Microbiology">
        <title>A 28 kbp segment from the spoVM region of the Bacillus subtilis 168 genome.</title>
        <authorList>
            <person name="Foulger D."/>
            <person name="Errington J."/>
        </authorList>
    </citation>
    <scope>NUCLEOTIDE SEQUENCE [GENOMIC DNA]</scope>
    <source>
        <strain>168</strain>
    </source>
</reference>
<reference key="2">
    <citation type="journal article" date="1997" name="Nature">
        <title>The complete genome sequence of the Gram-positive bacterium Bacillus subtilis.</title>
        <authorList>
            <person name="Kunst F."/>
            <person name="Ogasawara N."/>
            <person name="Moszer I."/>
            <person name="Albertini A.M."/>
            <person name="Alloni G."/>
            <person name="Azevedo V."/>
            <person name="Bertero M.G."/>
            <person name="Bessieres P."/>
            <person name="Bolotin A."/>
            <person name="Borchert S."/>
            <person name="Borriss R."/>
            <person name="Boursier L."/>
            <person name="Brans A."/>
            <person name="Braun M."/>
            <person name="Brignell S.C."/>
            <person name="Bron S."/>
            <person name="Brouillet S."/>
            <person name="Bruschi C.V."/>
            <person name="Caldwell B."/>
            <person name="Capuano V."/>
            <person name="Carter N.M."/>
            <person name="Choi S.-K."/>
            <person name="Codani J.-J."/>
            <person name="Connerton I.F."/>
            <person name="Cummings N.J."/>
            <person name="Daniel R.A."/>
            <person name="Denizot F."/>
            <person name="Devine K.M."/>
            <person name="Duesterhoeft A."/>
            <person name="Ehrlich S.D."/>
            <person name="Emmerson P.T."/>
            <person name="Entian K.-D."/>
            <person name="Errington J."/>
            <person name="Fabret C."/>
            <person name="Ferrari E."/>
            <person name="Foulger D."/>
            <person name="Fritz C."/>
            <person name="Fujita M."/>
            <person name="Fujita Y."/>
            <person name="Fuma S."/>
            <person name="Galizzi A."/>
            <person name="Galleron N."/>
            <person name="Ghim S.-Y."/>
            <person name="Glaser P."/>
            <person name="Goffeau A."/>
            <person name="Golightly E.J."/>
            <person name="Grandi G."/>
            <person name="Guiseppi G."/>
            <person name="Guy B.J."/>
            <person name="Haga K."/>
            <person name="Haiech J."/>
            <person name="Harwood C.R."/>
            <person name="Henaut A."/>
            <person name="Hilbert H."/>
            <person name="Holsappel S."/>
            <person name="Hosono S."/>
            <person name="Hullo M.-F."/>
            <person name="Itaya M."/>
            <person name="Jones L.-M."/>
            <person name="Joris B."/>
            <person name="Karamata D."/>
            <person name="Kasahara Y."/>
            <person name="Klaerr-Blanchard M."/>
            <person name="Klein C."/>
            <person name="Kobayashi Y."/>
            <person name="Koetter P."/>
            <person name="Koningstein G."/>
            <person name="Krogh S."/>
            <person name="Kumano M."/>
            <person name="Kurita K."/>
            <person name="Lapidus A."/>
            <person name="Lardinois S."/>
            <person name="Lauber J."/>
            <person name="Lazarevic V."/>
            <person name="Lee S.-M."/>
            <person name="Levine A."/>
            <person name="Liu H."/>
            <person name="Masuda S."/>
            <person name="Mauel C."/>
            <person name="Medigue C."/>
            <person name="Medina N."/>
            <person name="Mellado R.P."/>
            <person name="Mizuno M."/>
            <person name="Moestl D."/>
            <person name="Nakai S."/>
            <person name="Noback M."/>
            <person name="Noone D."/>
            <person name="O'Reilly M."/>
            <person name="Ogawa K."/>
            <person name="Ogiwara A."/>
            <person name="Oudega B."/>
            <person name="Park S.-H."/>
            <person name="Parro V."/>
            <person name="Pohl T.M."/>
            <person name="Portetelle D."/>
            <person name="Porwollik S."/>
            <person name="Prescott A.M."/>
            <person name="Presecan E."/>
            <person name="Pujic P."/>
            <person name="Purnelle B."/>
            <person name="Rapoport G."/>
            <person name="Rey M."/>
            <person name="Reynolds S."/>
            <person name="Rieger M."/>
            <person name="Rivolta C."/>
            <person name="Rocha E."/>
            <person name="Roche B."/>
            <person name="Rose M."/>
            <person name="Sadaie Y."/>
            <person name="Sato T."/>
            <person name="Scanlan E."/>
            <person name="Schleich S."/>
            <person name="Schroeter R."/>
            <person name="Scoffone F."/>
            <person name="Sekiguchi J."/>
            <person name="Sekowska A."/>
            <person name="Seror S.J."/>
            <person name="Serror P."/>
            <person name="Shin B.-S."/>
            <person name="Soldo B."/>
            <person name="Sorokin A."/>
            <person name="Tacconi E."/>
            <person name="Takagi T."/>
            <person name="Takahashi H."/>
            <person name="Takemaru K."/>
            <person name="Takeuchi M."/>
            <person name="Tamakoshi A."/>
            <person name="Tanaka T."/>
            <person name="Terpstra P."/>
            <person name="Tognoni A."/>
            <person name="Tosato V."/>
            <person name="Uchiyama S."/>
            <person name="Vandenbol M."/>
            <person name="Vannier F."/>
            <person name="Vassarotti A."/>
            <person name="Viari A."/>
            <person name="Wambutt R."/>
            <person name="Wedler E."/>
            <person name="Wedler H."/>
            <person name="Weitzenegger T."/>
            <person name="Winters P."/>
            <person name="Wipat A."/>
            <person name="Yamamoto H."/>
            <person name="Yamane K."/>
            <person name="Yasumoto K."/>
            <person name="Yata K."/>
            <person name="Yoshida K."/>
            <person name="Yoshikawa H.-F."/>
            <person name="Zumstein E."/>
            <person name="Yoshikawa H."/>
            <person name="Danchin A."/>
        </authorList>
    </citation>
    <scope>NUCLEOTIDE SEQUENCE [LARGE SCALE GENOMIC DNA]</scope>
    <source>
        <strain>168</strain>
    </source>
</reference>
<sequence length="363" mass="41570">MAELNKTKVRKELRTERPSIYSFELDEIKQWLTDNGEKPFRAAQIFEWLYEKRVSSFEDMTNLSKDLREKLNTRFVLTTLKTAVKQTSQDGTMKFLFELHDGYTIETVLMRHEYGNSVCVTTQVGCRIGCTFCASTLGGLKRNLEAGEIVAQVVKVQKALDETDERVSSVVIMGIGEPFDNFNEMLAFLKIINHDKGLNIGARHITVSTSGIIPKIYEFADQQMQINFAISLHAPNTEIRSRLMPINRAYKLPDLMEAVKYYINKTGRRISFEYGLFGGVNDQVEHAEELADLLEGVKCHVNLIPVNYVPERDYVRTPRDQIFAFEKTLKSRGVNVTIRREQGHDIDAACGQLRAKERQDETR</sequence>
<feature type="chain" id="PRO_0000171921" description="Probable dual-specificity RNA methyltransferase RlmN">
    <location>
        <begin position="1"/>
        <end position="363"/>
    </location>
</feature>
<feature type="domain" description="Radical SAM core" evidence="2">
    <location>
        <begin position="112"/>
        <end position="345"/>
    </location>
</feature>
<feature type="active site" description="Proton acceptor" evidence="1">
    <location>
        <position position="106"/>
    </location>
</feature>
<feature type="active site" description="S-methylcysteine intermediate" evidence="1">
    <location>
        <position position="350"/>
    </location>
</feature>
<feature type="binding site" evidence="1">
    <location>
        <position position="126"/>
    </location>
    <ligand>
        <name>[4Fe-4S] cluster</name>
        <dbReference type="ChEBI" id="CHEBI:49883"/>
        <note>4Fe-4S-S-AdoMet</note>
    </ligand>
</feature>
<feature type="binding site" evidence="1">
    <location>
        <position position="130"/>
    </location>
    <ligand>
        <name>[4Fe-4S] cluster</name>
        <dbReference type="ChEBI" id="CHEBI:49883"/>
        <note>4Fe-4S-S-AdoMet</note>
    </ligand>
</feature>
<feature type="binding site" evidence="1">
    <location>
        <position position="133"/>
    </location>
    <ligand>
        <name>[4Fe-4S] cluster</name>
        <dbReference type="ChEBI" id="CHEBI:49883"/>
        <note>4Fe-4S-S-AdoMet</note>
    </ligand>
</feature>
<feature type="binding site" evidence="1">
    <location>
        <begin position="176"/>
        <end position="177"/>
    </location>
    <ligand>
        <name>S-adenosyl-L-methionine</name>
        <dbReference type="ChEBI" id="CHEBI:59789"/>
    </ligand>
</feature>
<feature type="binding site" evidence="1">
    <location>
        <position position="208"/>
    </location>
    <ligand>
        <name>S-adenosyl-L-methionine</name>
        <dbReference type="ChEBI" id="CHEBI:59789"/>
    </ligand>
</feature>
<feature type="binding site" evidence="1">
    <location>
        <begin position="231"/>
        <end position="233"/>
    </location>
    <ligand>
        <name>S-adenosyl-L-methionine</name>
        <dbReference type="ChEBI" id="CHEBI:59789"/>
    </ligand>
</feature>
<feature type="binding site" evidence="1">
    <location>
        <position position="307"/>
    </location>
    <ligand>
        <name>S-adenosyl-L-methionine</name>
        <dbReference type="ChEBI" id="CHEBI:59789"/>
    </ligand>
</feature>
<feature type="disulfide bond" description="(transient)" evidence="1">
    <location>
        <begin position="119"/>
        <end position="350"/>
    </location>
</feature>
<gene>
    <name evidence="1" type="primary">rlmN</name>
    <name type="synonym">yloN</name>
    <name type="ordered locus">BSU15750</name>
</gene>
<organism>
    <name type="scientific">Bacillus subtilis (strain 168)</name>
    <dbReference type="NCBI Taxonomy" id="224308"/>
    <lineage>
        <taxon>Bacteria</taxon>
        <taxon>Bacillati</taxon>
        <taxon>Bacillota</taxon>
        <taxon>Bacilli</taxon>
        <taxon>Bacillales</taxon>
        <taxon>Bacillaceae</taxon>
        <taxon>Bacillus</taxon>
    </lineage>
</organism>
<accession>O34617</accession>
<evidence type="ECO:0000255" key="1">
    <source>
        <dbReference type="HAMAP-Rule" id="MF_01849"/>
    </source>
</evidence>
<evidence type="ECO:0000255" key="2">
    <source>
        <dbReference type="PROSITE-ProRule" id="PRU01266"/>
    </source>
</evidence>